<organism>
    <name type="scientific">Staphylococcus aureus (strain N315)</name>
    <dbReference type="NCBI Taxonomy" id="158879"/>
    <lineage>
        <taxon>Bacteria</taxon>
        <taxon>Bacillati</taxon>
        <taxon>Bacillota</taxon>
        <taxon>Bacilli</taxon>
        <taxon>Bacillales</taxon>
        <taxon>Staphylococcaceae</taxon>
        <taxon>Staphylococcus</taxon>
    </lineage>
</organism>
<accession>P99119</accession>
<accession>Q99R35</accession>
<name>LDH2_STAAN</name>
<feature type="chain" id="PRO_0000168389" description="L-lactate dehydrogenase 2">
    <location>
        <begin position="1"/>
        <end position="319"/>
    </location>
</feature>
<feature type="active site" description="Proton acceptor" evidence="2">
    <location>
        <position position="178"/>
    </location>
</feature>
<feature type="binding site" evidence="2">
    <location>
        <position position="16"/>
    </location>
    <ligand>
        <name>NAD(+)</name>
        <dbReference type="ChEBI" id="CHEBI:57540"/>
    </ligand>
</feature>
<feature type="binding site" evidence="2">
    <location>
        <position position="37"/>
    </location>
    <ligand>
        <name>NAD(+)</name>
        <dbReference type="ChEBI" id="CHEBI:57540"/>
    </ligand>
</feature>
<feature type="binding site" evidence="2">
    <location>
        <position position="42"/>
    </location>
    <ligand>
        <name>NAD(+)</name>
        <dbReference type="ChEBI" id="CHEBI:57540"/>
    </ligand>
</feature>
<feature type="binding site" evidence="2">
    <location>
        <position position="68"/>
    </location>
    <ligand>
        <name>NAD(+)</name>
        <dbReference type="ChEBI" id="CHEBI:57540"/>
    </ligand>
</feature>
<feature type="binding site" evidence="2">
    <location>
        <begin position="82"/>
        <end position="83"/>
    </location>
    <ligand>
        <name>NAD(+)</name>
        <dbReference type="ChEBI" id="CHEBI:57540"/>
    </ligand>
</feature>
<feature type="binding site" evidence="2">
    <location>
        <position position="85"/>
    </location>
    <ligand>
        <name>substrate</name>
    </ligand>
</feature>
<feature type="binding site" evidence="2">
    <location>
        <position position="91"/>
    </location>
    <ligand>
        <name>substrate</name>
    </ligand>
</feature>
<feature type="binding site" evidence="2">
    <location>
        <position position="104"/>
    </location>
    <ligand>
        <name>NAD(+)</name>
        <dbReference type="ChEBI" id="CHEBI:57540"/>
    </ligand>
</feature>
<feature type="binding site" evidence="2">
    <location>
        <begin position="121"/>
        <end position="123"/>
    </location>
    <ligand>
        <name>NAD(+)</name>
        <dbReference type="ChEBI" id="CHEBI:57540"/>
    </ligand>
</feature>
<feature type="binding site" evidence="2">
    <location>
        <begin position="123"/>
        <end position="126"/>
    </location>
    <ligand>
        <name>substrate</name>
    </ligand>
</feature>
<feature type="binding site" evidence="2">
    <location>
        <position position="146"/>
    </location>
    <ligand>
        <name>NAD(+)</name>
        <dbReference type="ChEBI" id="CHEBI:57540"/>
    </ligand>
</feature>
<feature type="binding site" evidence="2">
    <location>
        <begin position="151"/>
        <end position="154"/>
    </location>
    <ligand>
        <name>substrate</name>
    </ligand>
</feature>
<feature type="binding site" evidence="2">
    <location>
        <position position="231"/>
    </location>
    <ligand>
        <name>substrate</name>
    </ligand>
</feature>
<feature type="modified residue" description="Phosphotyrosine" evidence="2">
    <location>
        <position position="222"/>
    </location>
</feature>
<proteinExistence type="evidence at protein level"/>
<protein>
    <recommendedName>
        <fullName evidence="2">L-lactate dehydrogenase 2</fullName>
        <shortName evidence="2">L-LDH 2</shortName>
        <ecNumber evidence="2">1.1.1.27</ecNumber>
    </recommendedName>
</protein>
<sequence>MKTFGKKVVLIGDGSVGSSYAFAMVTQGVADEFVIIDIAKDKVKADVQDLNHGTVHSPSPVDVKAGEYEDCKDADLVVITAGAPQKPGETRLQLVEKNTKIMKSIVKSVMDSGFDGYFLIAANPVDILTRFVKEYTGLPAERVIGSGTVLDSARLQYLISQELGVAPSSVDASIIGEHGDTELAVWSQANVAGISVYDTLKEQTGSEAKAEEIYVNTRDAAYEIIQAKGSTYYGIALALMRISKAILNNENNVLNVSIQLDGQYGGHKGVYLGVPTLVNQHGAVKIYEMPLSAEEQALFDKSVKILEDTFDSIKYLLED</sequence>
<gene>
    <name evidence="2" type="primary">ldh2</name>
    <name type="synonym">ldhB</name>
    <name type="ordered locus">SA2395</name>
</gene>
<comment type="function">
    <text evidence="1 2">Catalyzes the conversion of lactate to pyruvate (Potential). Contributes to S.aureus growth during nitrosative stress in both aerobically and anaerobically cultured cells, despite playing a secondary role in this resistance mechanism (By similarity).</text>
</comment>
<comment type="catalytic activity">
    <reaction evidence="2">
        <text>(S)-lactate + NAD(+) = pyruvate + NADH + H(+)</text>
        <dbReference type="Rhea" id="RHEA:23444"/>
        <dbReference type="ChEBI" id="CHEBI:15361"/>
        <dbReference type="ChEBI" id="CHEBI:15378"/>
        <dbReference type="ChEBI" id="CHEBI:16651"/>
        <dbReference type="ChEBI" id="CHEBI:57540"/>
        <dbReference type="ChEBI" id="CHEBI:57945"/>
        <dbReference type="EC" id="1.1.1.27"/>
    </reaction>
</comment>
<comment type="pathway">
    <text evidence="2">Fermentation; pyruvate fermentation to lactate; (S)-lactate from pyruvate: step 1/1.</text>
</comment>
<comment type="subunit">
    <text evidence="2">Homotetramer.</text>
</comment>
<comment type="subcellular location">
    <subcellularLocation>
        <location evidence="2">Cytoplasm</location>
    </subcellularLocation>
</comment>
<comment type="similarity">
    <text evidence="2 3">Belongs to the LDH/MDH superfamily. LDH family.</text>
</comment>
<dbReference type="EC" id="1.1.1.27" evidence="2"/>
<dbReference type="EMBL" id="BA000018">
    <property type="protein sequence ID" value="BAB43700.1"/>
    <property type="molecule type" value="Genomic_DNA"/>
</dbReference>
<dbReference type="PIR" id="B90067">
    <property type="entry name" value="B90067"/>
</dbReference>
<dbReference type="RefSeq" id="WP_000846636.1">
    <property type="nucleotide sequence ID" value="NC_002745.2"/>
</dbReference>
<dbReference type="SMR" id="P99119"/>
<dbReference type="EnsemblBacteria" id="BAB43700">
    <property type="protein sequence ID" value="BAB43700"/>
    <property type="gene ID" value="BAB43700"/>
</dbReference>
<dbReference type="KEGG" id="sau:SA2395"/>
<dbReference type="HOGENOM" id="CLU_045401_1_1_9"/>
<dbReference type="UniPathway" id="UPA00554">
    <property type="reaction ID" value="UER00611"/>
</dbReference>
<dbReference type="GO" id="GO:0005737">
    <property type="term" value="C:cytoplasm"/>
    <property type="evidence" value="ECO:0007669"/>
    <property type="project" value="UniProtKB-SubCell"/>
</dbReference>
<dbReference type="GO" id="GO:0004459">
    <property type="term" value="F:L-lactate dehydrogenase activity"/>
    <property type="evidence" value="ECO:0007669"/>
    <property type="project" value="UniProtKB-UniRule"/>
</dbReference>
<dbReference type="GO" id="GO:0006096">
    <property type="term" value="P:glycolytic process"/>
    <property type="evidence" value="ECO:0007669"/>
    <property type="project" value="UniProtKB-UniRule"/>
</dbReference>
<dbReference type="GO" id="GO:0006089">
    <property type="term" value="P:lactate metabolic process"/>
    <property type="evidence" value="ECO:0007669"/>
    <property type="project" value="TreeGrafter"/>
</dbReference>
<dbReference type="CDD" id="cd05291">
    <property type="entry name" value="HicDH_like"/>
    <property type="match status" value="1"/>
</dbReference>
<dbReference type="FunFam" id="3.40.50.720:FF:000018">
    <property type="entry name" value="Malate dehydrogenase"/>
    <property type="match status" value="1"/>
</dbReference>
<dbReference type="Gene3D" id="3.90.110.10">
    <property type="entry name" value="Lactate dehydrogenase/glycoside hydrolase, family 4, C-terminal"/>
    <property type="match status" value="1"/>
</dbReference>
<dbReference type="Gene3D" id="3.40.50.720">
    <property type="entry name" value="NAD(P)-binding Rossmann-like Domain"/>
    <property type="match status" value="1"/>
</dbReference>
<dbReference type="HAMAP" id="MF_00488">
    <property type="entry name" value="Lactate_dehydrog"/>
    <property type="match status" value="1"/>
</dbReference>
<dbReference type="InterPro" id="IPR001557">
    <property type="entry name" value="L-lactate/malate_DH"/>
</dbReference>
<dbReference type="InterPro" id="IPR011304">
    <property type="entry name" value="L-lactate_DH"/>
</dbReference>
<dbReference type="InterPro" id="IPR018177">
    <property type="entry name" value="L-lactate_DH_AS"/>
</dbReference>
<dbReference type="InterPro" id="IPR022383">
    <property type="entry name" value="Lactate/malate_DH_C"/>
</dbReference>
<dbReference type="InterPro" id="IPR001236">
    <property type="entry name" value="Lactate/malate_DH_N"/>
</dbReference>
<dbReference type="InterPro" id="IPR015955">
    <property type="entry name" value="Lactate_DH/Glyco_Ohase_4_C"/>
</dbReference>
<dbReference type="InterPro" id="IPR036291">
    <property type="entry name" value="NAD(P)-bd_dom_sf"/>
</dbReference>
<dbReference type="NCBIfam" id="TIGR01771">
    <property type="entry name" value="L-LDH-NAD"/>
    <property type="match status" value="1"/>
</dbReference>
<dbReference type="NCBIfam" id="NF000824">
    <property type="entry name" value="PRK00066.1"/>
    <property type="match status" value="1"/>
</dbReference>
<dbReference type="PANTHER" id="PTHR43128">
    <property type="entry name" value="L-2-HYDROXYCARBOXYLATE DEHYDROGENASE (NAD(P)(+))"/>
    <property type="match status" value="1"/>
</dbReference>
<dbReference type="PANTHER" id="PTHR43128:SF16">
    <property type="entry name" value="L-LACTATE DEHYDROGENASE"/>
    <property type="match status" value="1"/>
</dbReference>
<dbReference type="Pfam" id="PF02866">
    <property type="entry name" value="Ldh_1_C"/>
    <property type="match status" value="1"/>
</dbReference>
<dbReference type="Pfam" id="PF00056">
    <property type="entry name" value="Ldh_1_N"/>
    <property type="match status" value="1"/>
</dbReference>
<dbReference type="PIRSF" id="PIRSF000102">
    <property type="entry name" value="Lac_mal_DH"/>
    <property type="match status" value="1"/>
</dbReference>
<dbReference type="PRINTS" id="PR00086">
    <property type="entry name" value="LLDHDRGNASE"/>
</dbReference>
<dbReference type="SUPFAM" id="SSF56327">
    <property type="entry name" value="LDH C-terminal domain-like"/>
    <property type="match status" value="1"/>
</dbReference>
<dbReference type="SUPFAM" id="SSF51735">
    <property type="entry name" value="NAD(P)-binding Rossmann-fold domains"/>
    <property type="match status" value="1"/>
</dbReference>
<dbReference type="PROSITE" id="PS00064">
    <property type="entry name" value="L_LDH"/>
    <property type="match status" value="1"/>
</dbReference>
<reference key="1">
    <citation type="journal article" date="2001" name="Lancet">
        <title>Whole genome sequencing of meticillin-resistant Staphylococcus aureus.</title>
        <authorList>
            <person name="Kuroda M."/>
            <person name="Ohta T."/>
            <person name="Uchiyama I."/>
            <person name="Baba T."/>
            <person name="Yuzawa H."/>
            <person name="Kobayashi I."/>
            <person name="Cui L."/>
            <person name="Oguchi A."/>
            <person name="Aoki K."/>
            <person name="Nagai Y."/>
            <person name="Lian J.-Q."/>
            <person name="Ito T."/>
            <person name="Kanamori M."/>
            <person name="Matsumaru H."/>
            <person name="Maruyama A."/>
            <person name="Murakami H."/>
            <person name="Hosoyama A."/>
            <person name="Mizutani-Ui Y."/>
            <person name="Takahashi N.K."/>
            <person name="Sawano T."/>
            <person name="Inoue R."/>
            <person name="Kaito C."/>
            <person name="Sekimizu K."/>
            <person name="Hirakawa H."/>
            <person name="Kuhara S."/>
            <person name="Goto S."/>
            <person name="Yabuzaki J."/>
            <person name="Kanehisa M."/>
            <person name="Yamashita A."/>
            <person name="Oshima K."/>
            <person name="Furuya K."/>
            <person name="Yoshino C."/>
            <person name="Shiba T."/>
            <person name="Hattori M."/>
            <person name="Ogasawara N."/>
            <person name="Hayashi H."/>
            <person name="Hiramatsu K."/>
        </authorList>
    </citation>
    <scope>NUCLEOTIDE SEQUENCE [LARGE SCALE GENOMIC DNA]</scope>
    <source>
        <strain>N315</strain>
    </source>
</reference>
<reference key="2">
    <citation type="journal article" date="2005" name="J. Microbiol. Methods">
        <title>Correlation of proteomic and transcriptomic profiles of Staphylococcus aureus during the post-exponential phase of growth.</title>
        <authorList>
            <person name="Scherl A."/>
            <person name="Francois P."/>
            <person name="Bento M."/>
            <person name="Deshusses J.M."/>
            <person name="Charbonnier Y."/>
            <person name="Converset V."/>
            <person name="Huyghe A."/>
            <person name="Walter N."/>
            <person name="Hoogland C."/>
            <person name="Appel R.D."/>
            <person name="Sanchez J.-C."/>
            <person name="Zimmermann-Ivol C.G."/>
            <person name="Corthals G.L."/>
            <person name="Hochstrasser D.F."/>
            <person name="Schrenzel J."/>
        </authorList>
    </citation>
    <scope>IDENTIFICATION BY MASS SPECTROMETRY</scope>
    <source>
        <strain>N315</strain>
    </source>
</reference>
<reference key="3">
    <citation type="submission" date="2007-10" db="UniProtKB">
        <title>Shotgun proteomic analysis of total and membrane protein extracts of S. aureus strain N315.</title>
        <authorList>
            <person name="Vaezzadeh A.R."/>
            <person name="Deshusses J."/>
            <person name="Lescuyer P."/>
            <person name="Hochstrasser D.F."/>
        </authorList>
    </citation>
    <scope>IDENTIFICATION BY MASS SPECTROMETRY [LARGE SCALE ANALYSIS]</scope>
    <source>
        <strain>N315</strain>
    </source>
</reference>
<keyword id="KW-0963">Cytoplasm</keyword>
<keyword id="KW-0520">NAD</keyword>
<keyword id="KW-0560">Oxidoreductase</keyword>
<keyword id="KW-0597">Phosphoprotein</keyword>
<keyword id="KW-0346">Stress response</keyword>
<evidence type="ECO:0000250" key="1">
    <source>
        <dbReference type="UniProtKB" id="Q5HCV0"/>
    </source>
</evidence>
<evidence type="ECO:0000255" key="2">
    <source>
        <dbReference type="HAMAP-Rule" id="MF_00488"/>
    </source>
</evidence>
<evidence type="ECO:0000305" key="3"/>